<reference key="1">
    <citation type="journal article" date="2009" name="J. Bacteriol.">
        <title>Complete and draft genome sequences of six members of the Aquificales.</title>
        <authorList>
            <person name="Reysenbach A.-L."/>
            <person name="Hamamura N."/>
            <person name="Podar M."/>
            <person name="Griffiths E."/>
            <person name="Ferreira S."/>
            <person name="Hochstein R."/>
            <person name="Heidelberg J."/>
            <person name="Johnson J."/>
            <person name="Mead D."/>
            <person name="Pohorille A."/>
            <person name="Sarmiento M."/>
            <person name="Schweighofer K."/>
            <person name="Seshadri R."/>
            <person name="Voytek M.A."/>
        </authorList>
    </citation>
    <scope>NUCLEOTIDE SEQUENCE [LARGE SCALE GENOMIC DNA]</scope>
    <source>
        <strain>YO3AOP1</strain>
    </source>
</reference>
<evidence type="ECO:0000255" key="1">
    <source>
        <dbReference type="HAMAP-Rule" id="MF_00358"/>
    </source>
</evidence>
<evidence type="ECO:0000305" key="2"/>
<accession>B2VA65</accession>
<dbReference type="EMBL" id="CP001080">
    <property type="protein sequence ID" value="ACD66838.1"/>
    <property type="molecule type" value="Genomic_DNA"/>
</dbReference>
<dbReference type="RefSeq" id="WP_012459901.1">
    <property type="nucleotide sequence ID" value="NC_010730.1"/>
</dbReference>
<dbReference type="SMR" id="B2VA65"/>
<dbReference type="STRING" id="436114.SYO3AOP1_1227"/>
<dbReference type="KEGG" id="sul:SYO3AOP1_1227"/>
<dbReference type="eggNOG" id="COG0828">
    <property type="taxonomic scope" value="Bacteria"/>
</dbReference>
<dbReference type="HOGENOM" id="CLU_159258_1_2_0"/>
<dbReference type="GO" id="GO:1990904">
    <property type="term" value="C:ribonucleoprotein complex"/>
    <property type="evidence" value="ECO:0007669"/>
    <property type="project" value="UniProtKB-KW"/>
</dbReference>
<dbReference type="GO" id="GO:0005840">
    <property type="term" value="C:ribosome"/>
    <property type="evidence" value="ECO:0007669"/>
    <property type="project" value="UniProtKB-KW"/>
</dbReference>
<dbReference type="GO" id="GO:0003735">
    <property type="term" value="F:structural constituent of ribosome"/>
    <property type="evidence" value="ECO:0007669"/>
    <property type="project" value="InterPro"/>
</dbReference>
<dbReference type="GO" id="GO:0006412">
    <property type="term" value="P:translation"/>
    <property type="evidence" value="ECO:0007669"/>
    <property type="project" value="UniProtKB-UniRule"/>
</dbReference>
<dbReference type="Gene3D" id="1.20.5.1150">
    <property type="entry name" value="Ribosomal protein S8"/>
    <property type="match status" value="1"/>
</dbReference>
<dbReference type="HAMAP" id="MF_00358">
    <property type="entry name" value="Ribosomal_bS21"/>
    <property type="match status" value="1"/>
</dbReference>
<dbReference type="InterPro" id="IPR001911">
    <property type="entry name" value="Ribosomal_bS21"/>
</dbReference>
<dbReference type="InterPro" id="IPR038380">
    <property type="entry name" value="Ribosomal_bS21_sf"/>
</dbReference>
<dbReference type="NCBIfam" id="TIGR00030">
    <property type="entry name" value="S21p"/>
    <property type="match status" value="1"/>
</dbReference>
<dbReference type="PANTHER" id="PTHR21109">
    <property type="entry name" value="MITOCHONDRIAL 28S RIBOSOMAL PROTEIN S21"/>
    <property type="match status" value="1"/>
</dbReference>
<dbReference type="PANTHER" id="PTHR21109:SF22">
    <property type="entry name" value="SMALL RIBOSOMAL SUBUNIT PROTEIN BS21"/>
    <property type="match status" value="1"/>
</dbReference>
<dbReference type="Pfam" id="PF01165">
    <property type="entry name" value="Ribosomal_S21"/>
    <property type="match status" value="1"/>
</dbReference>
<dbReference type="PRINTS" id="PR00976">
    <property type="entry name" value="RIBOSOMALS21"/>
</dbReference>
<comment type="similarity">
    <text evidence="1">Belongs to the bacterial ribosomal protein bS21 family.</text>
</comment>
<gene>
    <name evidence="1" type="primary">rpsU</name>
    <name type="ordered locus">SYO3AOP1_1227</name>
</gene>
<protein>
    <recommendedName>
        <fullName evidence="1">Small ribosomal subunit protein bS21</fullName>
    </recommendedName>
    <alternativeName>
        <fullName evidence="2">30S ribosomal protein S21</fullName>
    </alternativeName>
</protein>
<sequence length="64" mass="7664">MATVIVEGDFEKALKKFKKIIEKEGILTEYKRREFYEKPSVKRKRKERAARKRLIKALKKKGLL</sequence>
<keyword id="KW-0687">Ribonucleoprotein</keyword>
<keyword id="KW-0689">Ribosomal protein</keyword>
<proteinExistence type="inferred from homology"/>
<organism>
    <name type="scientific">Sulfurihydrogenibium sp. (strain YO3AOP1)</name>
    <dbReference type="NCBI Taxonomy" id="436114"/>
    <lineage>
        <taxon>Bacteria</taxon>
        <taxon>Pseudomonadati</taxon>
        <taxon>Aquificota</taxon>
        <taxon>Aquificia</taxon>
        <taxon>Aquificales</taxon>
        <taxon>Hydrogenothermaceae</taxon>
        <taxon>Sulfurihydrogenibium</taxon>
    </lineage>
</organism>
<feature type="chain" id="PRO_1000120670" description="Small ribosomal subunit protein bS21">
    <location>
        <begin position="1"/>
        <end position="64"/>
    </location>
</feature>
<name>RS21_SULSY</name>